<sequence length="101" mass="11609">MAKQSMKAREVKRVALAEKYFAKRAELKAIISDVNASDEDRWNAVLKLQTLPRDSSPSRQRNRCRQTGRPHAFLRKFGLSRIKVREAAMRGEIPGLKKASW</sequence>
<dbReference type="EMBL" id="CP000783">
    <property type="protein sequence ID" value="ABU75328.1"/>
    <property type="molecule type" value="Genomic_DNA"/>
</dbReference>
<dbReference type="RefSeq" id="WP_004388614.1">
    <property type="nucleotide sequence ID" value="NC_009778.1"/>
</dbReference>
<dbReference type="SMR" id="A7MPG2"/>
<dbReference type="GeneID" id="92804603"/>
<dbReference type="KEGG" id="esa:ESA_00019"/>
<dbReference type="HOGENOM" id="CLU_139869_0_1_6"/>
<dbReference type="Proteomes" id="UP000000260">
    <property type="component" value="Chromosome"/>
</dbReference>
<dbReference type="GO" id="GO:0005737">
    <property type="term" value="C:cytoplasm"/>
    <property type="evidence" value="ECO:0007669"/>
    <property type="project" value="UniProtKB-ARBA"/>
</dbReference>
<dbReference type="GO" id="GO:0015935">
    <property type="term" value="C:small ribosomal subunit"/>
    <property type="evidence" value="ECO:0007669"/>
    <property type="project" value="TreeGrafter"/>
</dbReference>
<dbReference type="GO" id="GO:0019843">
    <property type="term" value="F:rRNA binding"/>
    <property type="evidence" value="ECO:0007669"/>
    <property type="project" value="UniProtKB-UniRule"/>
</dbReference>
<dbReference type="GO" id="GO:0003735">
    <property type="term" value="F:structural constituent of ribosome"/>
    <property type="evidence" value="ECO:0007669"/>
    <property type="project" value="InterPro"/>
</dbReference>
<dbReference type="GO" id="GO:0006412">
    <property type="term" value="P:translation"/>
    <property type="evidence" value="ECO:0007669"/>
    <property type="project" value="UniProtKB-UniRule"/>
</dbReference>
<dbReference type="FunFam" id="1.10.287.1480:FF:000001">
    <property type="entry name" value="30S ribosomal protein S14"/>
    <property type="match status" value="1"/>
</dbReference>
<dbReference type="Gene3D" id="1.10.287.1480">
    <property type="match status" value="1"/>
</dbReference>
<dbReference type="HAMAP" id="MF_00537">
    <property type="entry name" value="Ribosomal_uS14_1"/>
    <property type="match status" value="1"/>
</dbReference>
<dbReference type="InterPro" id="IPR001209">
    <property type="entry name" value="Ribosomal_uS14"/>
</dbReference>
<dbReference type="InterPro" id="IPR023036">
    <property type="entry name" value="Ribosomal_uS14_bac/plastid"/>
</dbReference>
<dbReference type="InterPro" id="IPR018271">
    <property type="entry name" value="Ribosomal_uS14_CS"/>
</dbReference>
<dbReference type="NCBIfam" id="NF006477">
    <property type="entry name" value="PRK08881.1"/>
    <property type="match status" value="1"/>
</dbReference>
<dbReference type="PANTHER" id="PTHR19836">
    <property type="entry name" value="30S RIBOSOMAL PROTEIN S14"/>
    <property type="match status" value="1"/>
</dbReference>
<dbReference type="PANTHER" id="PTHR19836:SF19">
    <property type="entry name" value="SMALL RIBOSOMAL SUBUNIT PROTEIN US14M"/>
    <property type="match status" value="1"/>
</dbReference>
<dbReference type="Pfam" id="PF00253">
    <property type="entry name" value="Ribosomal_S14"/>
    <property type="match status" value="1"/>
</dbReference>
<dbReference type="SUPFAM" id="SSF57716">
    <property type="entry name" value="Glucocorticoid receptor-like (DNA-binding domain)"/>
    <property type="match status" value="1"/>
</dbReference>
<dbReference type="PROSITE" id="PS00527">
    <property type="entry name" value="RIBOSOMAL_S14"/>
    <property type="match status" value="1"/>
</dbReference>
<feature type="chain" id="PRO_1000128398" description="Small ribosomal subunit protein uS14">
    <location>
        <begin position="1"/>
        <end position="101"/>
    </location>
</feature>
<proteinExistence type="inferred from homology"/>
<protein>
    <recommendedName>
        <fullName evidence="1">Small ribosomal subunit protein uS14</fullName>
    </recommendedName>
    <alternativeName>
        <fullName evidence="2">30S ribosomal protein S14</fullName>
    </alternativeName>
</protein>
<keyword id="KW-1185">Reference proteome</keyword>
<keyword id="KW-0687">Ribonucleoprotein</keyword>
<keyword id="KW-0689">Ribosomal protein</keyword>
<keyword id="KW-0694">RNA-binding</keyword>
<keyword id="KW-0699">rRNA-binding</keyword>
<comment type="function">
    <text evidence="1">Binds 16S rRNA, required for the assembly of 30S particles and may also be responsible for determining the conformation of the 16S rRNA at the A site.</text>
</comment>
<comment type="subunit">
    <text evidence="1">Part of the 30S ribosomal subunit. Contacts proteins S3 and S10.</text>
</comment>
<comment type="similarity">
    <text evidence="1">Belongs to the universal ribosomal protein uS14 family.</text>
</comment>
<reference key="1">
    <citation type="journal article" date="2010" name="PLoS ONE">
        <title>Genome sequence of Cronobacter sakazakii BAA-894 and comparative genomic hybridization analysis with other Cronobacter species.</title>
        <authorList>
            <person name="Kucerova E."/>
            <person name="Clifton S.W."/>
            <person name="Xia X.Q."/>
            <person name="Long F."/>
            <person name="Porwollik S."/>
            <person name="Fulton L."/>
            <person name="Fronick C."/>
            <person name="Minx P."/>
            <person name="Kyung K."/>
            <person name="Warren W."/>
            <person name="Fulton R."/>
            <person name="Feng D."/>
            <person name="Wollam A."/>
            <person name="Shah N."/>
            <person name="Bhonagiri V."/>
            <person name="Nash W.E."/>
            <person name="Hallsworth-Pepin K."/>
            <person name="Wilson R.K."/>
            <person name="McClelland M."/>
            <person name="Forsythe S.J."/>
        </authorList>
    </citation>
    <scope>NUCLEOTIDE SEQUENCE [LARGE SCALE GENOMIC DNA]</scope>
    <source>
        <strain>ATCC BAA-894</strain>
    </source>
</reference>
<organism>
    <name type="scientific">Cronobacter sakazakii (strain ATCC BAA-894)</name>
    <name type="common">Enterobacter sakazakii</name>
    <dbReference type="NCBI Taxonomy" id="290339"/>
    <lineage>
        <taxon>Bacteria</taxon>
        <taxon>Pseudomonadati</taxon>
        <taxon>Pseudomonadota</taxon>
        <taxon>Gammaproteobacteria</taxon>
        <taxon>Enterobacterales</taxon>
        <taxon>Enterobacteriaceae</taxon>
        <taxon>Cronobacter</taxon>
    </lineage>
</organism>
<accession>A7MPG2</accession>
<name>RS14_CROS8</name>
<evidence type="ECO:0000255" key="1">
    <source>
        <dbReference type="HAMAP-Rule" id="MF_00537"/>
    </source>
</evidence>
<evidence type="ECO:0000305" key="2"/>
<gene>
    <name evidence="1" type="primary">rpsN</name>
    <name type="ordered locus">ESA_00019</name>
</gene>